<name>NUOK_BURO1</name>
<organism>
    <name type="scientific">Burkholderia orbicola (strain AU 1054)</name>
    <dbReference type="NCBI Taxonomy" id="331271"/>
    <lineage>
        <taxon>Bacteria</taxon>
        <taxon>Pseudomonadati</taxon>
        <taxon>Pseudomonadota</taxon>
        <taxon>Betaproteobacteria</taxon>
        <taxon>Burkholderiales</taxon>
        <taxon>Burkholderiaceae</taxon>
        <taxon>Burkholderia</taxon>
        <taxon>Burkholderia cepacia complex</taxon>
        <taxon>Burkholderia orbicola</taxon>
    </lineage>
</organism>
<dbReference type="EC" id="7.1.1.-" evidence="1"/>
<dbReference type="EMBL" id="CP000378">
    <property type="protein sequence ID" value="ABF76532.1"/>
    <property type="molecule type" value="Genomic_DNA"/>
</dbReference>
<dbReference type="SMR" id="Q1BV23"/>
<dbReference type="HOGENOM" id="CLU_144724_2_0_4"/>
<dbReference type="GO" id="GO:0030964">
    <property type="term" value="C:NADH dehydrogenase complex"/>
    <property type="evidence" value="ECO:0007669"/>
    <property type="project" value="TreeGrafter"/>
</dbReference>
<dbReference type="GO" id="GO:0005886">
    <property type="term" value="C:plasma membrane"/>
    <property type="evidence" value="ECO:0007669"/>
    <property type="project" value="UniProtKB-SubCell"/>
</dbReference>
<dbReference type="GO" id="GO:0050136">
    <property type="term" value="F:NADH:ubiquinone reductase (non-electrogenic) activity"/>
    <property type="evidence" value="ECO:0007669"/>
    <property type="project" value="UniProtKB-UniRule"/>
</dbReference>
<dbReference type="GO" id="GO:0048038">
    <property type="term" value="F:quinone binding"/>
    <property type="evidence" value="ECO:0007669"/>
    <property type="project" value="UniProtKB-KW"/>
</dbReference>
<dbReference type="GO" id="GO:0042773">
    <property type="term" value="P:ATP synthesis coupled electron transport"/>
    <property type="evidence" value="ECO:0007669"/>
    <property type="project" value="InterPro"/>
</dbReference>
<dbReference type="FunFam" id="1.10.287.3510:FF:000001">
    <property type="entry name" value="NADH-quinone oxidoreductase subunit K"/>
    <property type="match status" value="1"/>
</dbReference>
<dbReference type="Gene3D" id="1.10.287.3510">
    <property type="match status" value="1"/>
</dbReference>
<dbReference type="HAMAP" id="MF_01456">
    <property type="entry name" value="NDH1_NuoK"/>
    <property type="match status" value="1"/>
</dbReference>
<dbReference type="InterPro" id="IPR001133">
    <property type="entry name" value="NADH_UbQ_OxRdtase_chain4L/K"/>
</dbReference>
<dbReference type="InterPro" id="IPR039428">
    <property type="entry name" value="NUOK/Mnh_C1-like"/>
</dbReference>
<dbReference type="NCBIfam" id="NF004320">
    <property type="entry name" value="PRK05715.1-2"/>
    <property type="match status" value="1"/>
</dbReference>
<dbReference type="NCBIfam" id="NF004321">
    <property type="entry name" value="PRK05715.1-3"/>
    <property type="match status" value="1"/>
</dbReference>
<dbReference type="NCBIfam" id="NF004323">
    <property type="entry name" value="PRK05715.1-5"/>
    <property type="match status" value="1"/>
</dbReference>
<dbReference type="PANTHER" id="PTHR11434:SF21">
    <property type="entry name" value="NADH DEHYDROGENASE SUBUNIT 4L-RELATED"/>
    <property type="match status" value="1"/>
</dbReference>
<dbReference type="PANTHER" id="PTHR11434">
    <property type="entry name" value="NADH-UBIQUINONE OXIDOREDUCTASE SUBUNIT ND4L"/>
    <property type="match status" value="1"/>
</dbReference>
<dbReference type="Pfam" id="PF00420">
    <property type="entry name" value="Oxidored_q2"/>
    <property type="match status" value="1"/>
</dbReference>
<evidence type="ECO:0000255" key="1">
    <source>
        <dbReference type="HAMAP-Rule" id="MF_01456"/>
    </source>
</evidence>
<comment type="function">
    <text evidence="1">NDH-1 shuttles electrons from NADH, via FMN and iron-sulfur (Fe-S) centers, to quinones in the respiratory chain. The immediate electron acceptor for the enzyme in this species is believed to be ubiquinone. Couples the redox reaction to proton translocation (for every two electrons transferred, four hydrogen ions are translocated across the cytoplasmic membrane), and thus conserves the redox energy in a proton gradient.</text>
</comment>
<comment type="catalytic activity">
    <reaction evidence="1">
        <text>a quinone + NADH + 5 H(+)(in) = a quinol + NAD(+) + 4 H(+)(out)</text>
        <dbReference type="Rhea" id="RHEA:57888"/>
        <dbReference type="ChEBI" id="CHEBI:15378"/>
        <dbReference type="ChEBI" id="CHEBI:24646"/>
        <dbReference type="ChEBI" id="CHEBI:57540"/>
        <dbReference type="ChEBI" id="CHEBI:57945"/>
        <dbReference type="ChEBI" id="CHEBI:132124"/>
    </reaction>
</comment>
<comment type="subunit">
    <text evidence="1">NDH-1 is composed of 14 different subunits. Subunits NuoA, H, J, K, L, M, N constitute the membrane sector of the complex.</text>
</comment>
<comment type="subcellular location">
    <subcellularLocation>
        <location evidence="1">Cell inner membrane</location>
        <topology evidence="1">Multi-pass membrane protein</topology>
    </subcellularLocation>
</comment>
<comment type="similarity">
    <text evidence="1">Belongs to the complex I subunit 4L family.</text>
</comment>
<reference key="1">
    <citation type="submission" date="2006-05" db="EMBL/GenBank/DDBJ databases">
        <title>Complete sequence of chromosome 1 of Burkholderia cenocepacia AU 1054.</title>
        <authorList>
            <consortium name="US DOE Joint Genome Institute"/>
            <person name="Copeland A."/>
            <person name="Lucas S."/>
            <person name="Lapidus A."/>
            <person name="Barry K."/>
            <person name="Detter J.C."/>
            <person name="Glavina del Rio T."/>
            <person name="Hammon N."/>
            <person name="Israni S."/>
            <person name="Dalin E."/>
            <person name="Tice H."/>
            <person name="Pitluck S."/>
            <person name="Chain P."/>
            <person name="Malfatti S."/>
            <person name="Shin M."/>
            <person name="Vergez L."/>
            <person name="Schmutz J."/>
            <person name="Larimer F."/>
            <person name="Land M."/>
            <person name="Hauser L."/>
            <person name="Kyrpides N."/>
            <person name="Lykidis A."/>
            <person name="LiPuma J.J."/>
            <person name="Konstantinidis K."/>
            <person name="Tiedje J.M."/>
            <person name="Richardson P."/>
        </authorList>
    </citation>
    <scope>NUCLEOTIDE SEQUENCE [LARGE SCALE GENOMIC DNA]</scope>
    <source>
        <strain>AU 1054</strain>
    </source>
</reference>
<protein>
    <recommendedName>
        <fullName evidence="1">NADH-quinone oxidoreductase subunit K</fullName>
        <ecNumber evidence="1">7.1.1.-</ecNumber>
    </recommendedName>
    <alternativeName>
        <fullName evidence="1">NADH dehydrogenase I subunit K</fullName>
    </alternativeName>
    <alternativeName>
        <fullName evidence="1">NDH-1 subunit K</fullName>
    </alternativeName>
</protein>
<proteinExistence type="inferred from homology"/>
<accession>Q1BV23</accession>
<gene>
    <name evidence="1" type="primary">nuoK</name>
    <name type="ordered locus">Bcen_1627</name>
</gene>
<feature type="chain" id="PRO_0000389984" description="NADH-quinone oxidoreductase subunit K">
    <location>
        <begin position="1"/>
        <end position="101"/>
    </location>
</feature>
<feature type="transmembrane region" description="Helical" evidence="1">
    <location>
        <begin position="4"/>
        <end position="24"/>
    </location>
</feature>
<feature type="transmembrane region" description="Helical" evidence="1">
    <location>
        <begin position="30"/>
        <end position="50"/>
    </location>
</feature>
<feature type="transmembrane region" description="Helical" evidence="1">
    <location>
        <begin position="61"/>
        <end position="81"/>
    </location>
</feature>
<keyword id="KW-0997">Cell inner membrane</keyword>
<keyword id="KW-1003">Cell membrane</keyword>
<keyword id="KW-0472">Membrane</keyword>
<keyword id="KW-0520">NAD</keyword>
<keyword id="KW-0874">Quinone</keyword>
<keyword id="KW-1278">Translocase</keyword>
<keyword id="KW-0812">Transmembrane</keyword>
<keyword id="KW-1133">Transmembrane helix</keyword>
<keyword id="KW-0813">Transport</keyword>
<keyword id="KW-0830">Ubiquinone</keyword>
<sequence length="101" mass="11086">MLTLAHYLVLGAILFAIAIVGIFLNRRNVIIILMSIELMLLAVNTNFVAFSHYLGDVHGQIFVFFVLTVAAAEAAIGLAILVTLFRKLDTINVEDLDQLKG</sequence>